<name>WZYE_SALNS</name>
<feature type="chain" id="PRO_1000200217" description="Probable ECA polymerase">
    <location>
        <begin position="1"/>
        <end position="452"/>
    </location>
</feature>
<feature type="transmembrane region" description="Helical" evidence="1">
    <location>
        <begin position="6"/>
        <end position="26"/>
    </location>
</feature>
<feature type="transmembrane region" description="Helical" evidence="1">
    <location>
        <begin position="37"/>
        <end position="57"/>
    </location>
</feature>
<feature type="transmembrane region" description="Helical" evidence="1">
    <location>
        <begin position="63"/>
        <end position="83"/>
    </location>
</feature>
<feature type="transmembrane region" description="Helical" evidence="1">
    <location>
        <begin position="118"/>
        <end position="138"/>
    </location>
</feature>
<feature type="transmembrane region" description="Helical" evidence="1">
    <location>
        <begin position="155"/>
        <end position="175"/>
    </location>
</feature>
<feature type="transmembrane region" description="Helical" evidence="1">
    <location>
        <begin position="181"/>
        <end position="201"/>
    </location>
</feature>
<feature type="transmembrane region" description="Helical" evidence="1">
    <location>
        <begin position="207"/>
        <end position="227"/>
    </location>
</feature>
<feature type="transmembrane region" description="Helical" evidence="1">
    <location>
        <begin position="228"/>
        <end position="248"/>
    </location>
</feature>
<feature type="transmembrane region" description="Helical" evidence="1">
    <location>
        <begin position="341"/>
        <end position="361"/>
    </location>
</feature>
<feature type="transmembrane region" description="Helical" evidence="1">
    <location>
        <begin position="378"/>
        <end position="398"/>
    </location>
</feature>
<feature type="transmembrane region" description="Helical" evidence="1">
    <location>
        <begin position="410"/>
        <end position="430"/>
    </location>
</feature>
<accession>B4SZ39</accession>
<sequence>MSLMQFSGLLVVWLLSTLFIATLTWFEFRRVRFNFNVFFSLLFLLTFFFGFPLTSVLVFRFDVGVAPPEILLQALLSAACFYGVYYVTYKTRLRKRVVDVPRKPLFTMNRVETHLTWVILMGIALVSVAIFFMHNGFLLFRLHSYSQIFSSEVSGVALKRFFYFFIPAMLVVYFLRQDSKAWLFFLVSTVAFGLLTYMIVGGTRANIIIAFAIFLFIGIIRGWISLWMLAAAGVLGIVGMFWLALKRYGLNVSGDEAFYTFLYLTRDTFSPWENLALLLQNYHNIEFQGLAPIVRDFYVFIPTWLWPGRPSIVLNSANYFTWEVLNNHSGLAISPTLIGSLVVMGGALFIPLGAIVVGMIIKWFDWLYELGNREPNRYKAAILHSFCFGAIFNMIVLAREGLDSFVSRVVFFLVVFGASLLVAKLLFWLFDSAGLIHKRTTSLPQAQVEGKL</sequence>
<dbReference type="EMBL" id="CP001113">
    <property type="protein sequence ID" value="ACF61556.1"/>
    <property type="molecule type" value="Genomic_DNA"/>
</dbReference>
<dbReference type="RefSeq" id="WP_000055610.1">
    <property type="nucleotide sequence ID" value="NZ_CCMR01000001.1"/>
</dbReference>
<dbReference type="KEGG" id="see:SNSL254_A4208"/>
<dbReference type="HOGENOM" id="CLU_049711_0_0_6"/>
<dbReference type="UniPathway" id="UPA00566"/>
<dbReference type="Proteomes" id="UP000008824">
    <property type="component" value="Chromosome"/>
</dbReference>
<dbReference type="GO" id="GO:0005886">
    <property type="term" value="C:plasma membrane"/>
    <property type="evidence" value="ECO:0007669"/>
    <property type="project" value="UniProtKB-SubCell"/>
</dbReference>
<dbReference type="GO" id="GO:0009246">
    <property type="term" value="P:enterobacterial common antigen biosynthetic process"/>
    <property type="evidence" value="ECO:0007669"/>
    <property type="project" value="UniProtKB-UniRule"/>
</dbReference>
<dbReference type="HAMAP" id="MF_01003">
    <property type="entry name" value="WzyE"/>
    <property type="match status" value="1"/>
</dbReference>
<dbReference type="InterPro" id="IPR010691">
    <property type="entry name" value="WzyE"/>
</dbReference>
<dbReference type="NCBIfam" id="NF002820">
    <property type="entry name" value="PRK02975.1"/>
    <property type="match status" value="1"/>
</dbReference>
<dbReference type="Pfam" id="PF06899">
    <property type="entry name" value="WzyE"/>
    <property type="match status" value="1"/>
</dbReference>
<proteinExistence type="inferred from homology"/>
<keyword id="KW-0997">Cell inner membrane</keyword>
<keyword id="KW-1003">Cell membrane</keyword>
<keyword id="KW-0472">Membrane</keyword>
<keyword id="KW-0812">Transmembrane</keyword>
<keyword id="KW-1133">Transmembrane helix</keyword>
<organism>
    <name type="scientific">Salmonella newport (strain SL254)</name>
    <dbReference type="NCBI Taxonomy" id="423368"/>
    <lineage>
        <taxon>Bacteria</taxon>
        <taxon>Pseudomonadati</taxon>
        <taxon>Pseudomonadota</taxon>
        <taxon>Gammaproteobacteria</taxon>
        <taxon>Enterobacterales</taxon>
        <taxon>Enterobacteriaceae</taxon>
        <taxon>Salmonella</taxon>
    </lineage>
</organism>
<reference key="1">
    <citation type="journal article" date="2011" name="J. Bacteriol.">
        <title>Comparative genomics of 28 Salmonella enterica isolates: evidence for CRISPR-mediated adaptive sublineage evolution.</title>
        <authorList>
            <person name="Fricke W.F."/>
            <person name="Mammel M.K."/>
            <person name="McDermott P.F."/>
            <person name="Tartera C."/>
            <person name="White D.G."/>
            <person name="Leclerc J.E."/>
            <person name="Ravel J."/>
            <person name="Cebula T.A."/>
        </authorList>
    </citation>
    <scope>NUCLEOTIDE SEQUENCE [LARGE SCALE GENOMIC DNA]</scope>
    <source>
        <strain>SL254</strain>
    </source>
</reference>
<gene>
    <name evidence="1" type="primary">wzyE</name>
    <name type="ordered locus">SNSL254_A4208</name>
</gene>
<evidence type="ECO:0000255" key="1">
    <source>
        <dbReference type="HAMAP-Rule" id="MF_01003"/>
    </source>
</evidence>
<protein>
    <recommendedName>
        <fullName evidence="1">Probable ECA polymerase</fullName>
    </recommendedName>
</protein>
<comment type="function">
    <text evidence="1">Probably involved in the polymerization of enterobacterial common antigen (ECA) trisaccharide repeat units.</text>
</comment>
<comment type="pathway">
    <text evidence="1">Bacterial outer membrane biogenesis; enterobacterial common antigen biosynthesis.</text>
</comment>
<comment type="subunit">
    <text evidence="1">Probably part of a complex composed of WzxE, WzyE and WzzE.</text>
</comment>
<comment type="subcellular location">
    <subcellularLocation>
        <location evidence="1">Cell inner membrane</location>
        <topology evidence="1">Multi-pass membrane protein</topology>
    </subcellularLocation>
</comment>
<comment type="similarity">
    <text evidence="1">Belongs to the WzyE family.</text>
</comment>